<evidence type="ECO:0000255" key="1"/>
<evidence type="ECO:0000269" key="2">
    <source>
    </source>
</evidence>
<evidence type="ECO:0000305" key="3"/>
<feature type="chain" id="PRO_0000217061" description="Antiholin-like protein LrgB">
    <location>
        <begin position="1"/>
        <end position="233"/>
    </location>
</feature>
<feature type="transmembrane region" description="Helical" evidence="1">
    <location>
        <begin position="5"/>
        <end position="27"/>
    </location>
</feature>
<feature type="transmembrane region" description="Helical" evidence="1">
    <location>
        <begin position="34"/>
        <end position="56"/>
    </location>
</feature>
<feature type="transmembrane region" description="Helical" evidence="1">
    <location>
        <begin position="67"/>
        <end position="84"/>
    </location>
</feature>
<feature type="transmembrane region" description="Helical" evidence="1">
    <location>
        <begin position="97"/>
        <end position="116"/>
    </location>
</feature>
<feature type="transmembrane region" description="Helical" evidence="1">
    <location>
        <begin position="126"/>
        <end position="148"/>
    </location>
</feature>
<feature type="transmembrane region" description="Helical" evidence="1">
    <location>
        <begin position="155"/>
        <end position="177"/>
    </location>
</feature>
<feature type="transmembrane region" description="Helical" evidence="1">
    <location>
        <begin position="210"/>
        <end position="232"/>
    </location>
</feature>
<sequence length="233" mass="25097">MINHLALNTPYFGILLSVIPFFLATILFEKTNRFFLFAPLFVSMVFGVAFLYLTGIPYKTYKIGGDIIYFFLEPATICFAIPLYKKREVLVKHWHRIIGGIGIGTVVALLIILTFAKLAQFANDVILSMLPQAATTAIALPVSAGIGGIKELTSLAVILNGVIIYALGNKFLKLFRITNPIARGLALGTSGHTLGVAPAKELGPVEESMASIALVLVGVVVVAVVPVFVAIFF</sequence>
<protein>
    <recommendedName>
        <fullName>Antiholin-like protein LrgB</fullName>
    </recommendedName>
</protein>
<gene>
    <name type="primary">lrgB</name>
    <name type="ordered locus">SAOUHSC_00233</name>
</gene>
<keyword id="KW-1003">Cell membrane</keyword>
<keyword id="KW-0204">Cytolysis</keyword>
<keyword id="KW-0472">Membrane</keyword>
<keyword id="KW-1185">Reference proteome</keyword>
<keyword id="KW-0812">Transmembrane</keyword>
<keyword id="KW-1133">Transmembrane helix</keyword>
<dbReference type="EMBL" id="U52961">
    <property type="protein sequence ID" value="AAC44840.1"/>
    <property type="molecule type" value="Genomic_DNA"/>
</dbReference>
<dbReference type="EMBL" id="CP000253">
    <property type="protein sequence ID" value="ABD29408.1"/>
    <property type="molecule type" value="Genomic_DNA"/>
</dbReference>
<dbReference type="RefSeq" id="WP_000607067.1">
    <property type="nucleotide sequence ID" value="NZ_LS483365.1"/>
</dbReference>
<dbReference type="RefSeq" id="YP_498828.1">
    <property type="nucleotide sequence ID" value="NC_007795.1"/>
</dbReference>
<dbReference type="STRING" id="93061.SAOUHSC_00233"/>
<dbReference type="TCDB" id="2.A.122.1.3">
    <property type="family name" value="the lrgb/cidb holin-like glycolate/glycerate transporter (lrgb/cidb/ggt) family"/>
</dbReference>
<dbReference type="PaxDb" id="1280-SAXN108_0243"/>
<dbReference type="GeneID" id="3920308"/>
<dbReference type="KEGG" id="sao:SAOUHSC_00233"/>
<dbReference type="PATRIC" id="fig|93061.5.peg.214"/>
<dbReference type="eggNOG" id="COG1346">
    <property type="taxonomic scope" value="Bacteria"/>
</dbReference>
<dbReference type="HOGENOM" id="CLU_082099_1_0_9"/>
<dbReference type="OrthoDB" id="9811701at2"/>
<dbReference type="PRO" id="PR:P60643"/>
<dbReference type="Proteomes" id="UP000008816">
    <property type="component" value="Chromosome"/>
</dbReference>
<dbReference type="GO" id="GO:0005886">
    <property type="term" value="C:plasma membrane"/>
    <property type="evidence" value="ECO:0007669"/>
    <property type="project" value="UniProtKB-SubCell"/>
</dbReference>
<dbReference type="GO" id="GO:0019835">
    <property type="term" value="P:cytolysis"/>
    <property type="evidence" value="ECO:0007669"/>
    <property type="project" value="UniProtKB-UniRule"/>
</dbReference>
<dbReference type="GO" id="GO:0031640">
    <property type="term" value="P:killing of cells of another organism"/>
    <property type="evidence" value="ECO:0007669"/>
    <property type="project" value="UniProtKB-KW"/>
</dbReference>
<dbReference type="GO" id="GO:0012501">
    <property type="term" value="P:programmed cell death"/>
    <property type="evidence" value="ECO:0007669"/>
    <property type="project" value="UniProtKB-UniRule"/>
</dbReference>
<dbReference type="GO" id="GO:1900231">
    <property type="term" value="P:regulation of single-species biofilm formation on inanimate substrate"/>
    <property type="evidence" value="ECO:0000315"/>
    <property type="project" value="CACAO"/>
</dbReference>
<dbReference type="HAMAP" id="MF_01142">
    <property type="entry name" value="LrgB"/>
    <property type="match status" value="1"/>
</dbReference>
<dbReference type="InterPro" id="IPR024891">
    <property type="entry name" value="Antiholin-like_LrgB"/>
</dbReference>
<dbReference type="InterPro" id="IPR007300">
    <property type="entry name" value="CidB/LrgB"/>
</dbReference>
<dbReference type="NCBIfam" id="NF003291">
    <property type="entry name" value="PRK04288.1"/>
    <property type="match status" value="1"/>
</dbReference>
<dbReference type="PANTHER" id="PTHR30249:SF0">
    <property type="entry name" value="PLASTIDAL GLYCOLATE_GLYCERATE TRANSLOCATOR 1, CHLOROPLASTIC"/>
    <property type="match status" value="1"/>
</dbReference>
<dbReference type="PANTHER" id="PTHR30249">
    <property type="entry name" value="PUTATIVE SEROTONIN TRANSPORTER"/>
    <property type="match status" value="1"/>
</dbReference>
<dbReference type="Pfam" id="PF04172">
    <property type="entry name" value="LrgB"/>
    <property type="match status" value="1"/>
</dbReference>
<name>LRGB_STAA8</name>
<proteinExistence type="evidence at protein level"/>
<reference key="1">
    <citation type="journal article" date="1996" name="J. Bacteriol.">
        <title>Identification of LytSR-regulated genes from Staphylococcus aureus.</title>
        <authorList>
            <person name="Brunskill E.W."/>
            <person name="Bayles K.W."/>
        </authorList>
    </citation>
    <scope>NUCLEOTIDE SEQUENCE [GENOMIC DNA]</scope>
    <scope>REGULATION BY LYTR/LYTS</scope>
</reference>
<reference key="2">
    <citation type="book" date="2006" name="Gram positive pathogens, 2nd edition">
        <title>The Staphylococcus aureus NCTC 8325 genome.</title>
        <editorList>
            <person name="Fischetti V."/>
            <person name="Novick R."/>
            <person name="Ferretti J."/>
            <person name="Portnoy D."/>
            <person name="Rood J."/>
        </editorList>
        <authorList>
            <person name="Gillaspy A.F."/>
            <person name="Worrell V."/>
            <person name="Orvis J."/>
            <person name="Roe B.A."/>
            <person name="Dyer D.W."/>
            <person name="Iandolo J.J."/>
        </authorList>
    </citation>
    <scope>NUCLEOTIDE SEQUENCE [LARGE SCALE GENOMIC DNA]</scope>
    <source>
        <strain>NCTC 8325 / PS 47</strain>
    </source>
</reference>
<reference key="3">
    <citation type="journal article" date="2000" name="J. Bacteriol.">
        <title>The Staphylococcus aureus lrgAB operon modulates murein hydrolase activity and penicillin tolerance.</title>
        <authorList>
            <person name="Groicher K.H."/>
            <person name="Firek B.A."/>
            <person name="Fujimoto D.F."/>
            <person name="Bayles K.W."/>
        </authorList>
    </citation>
    <scope>FUNCTION</scope>
</reference>
<reference key="4">
    <citation type="journal article" date="2003" name="J. Bacteriol.">
        <title>The Staphylococcus aureus cidAB operon: evaluation of its role in regulation of murein hydrolase activity and penicillin tolerance.</title>
        <authorList>
            <person name="Rice K.C."/>
            <person name="Firek B.A."/>
            <person name="Nelson J.B."/>
            <person name="Yang S.-J."/>
            <person name="Patton T.G."/>
            <person name="Bayles K.W."/>
        </authorList>
    </citation>
    <scope>INTERACTION WITH CIDAB</scope>
</reference>
<reference key="5">
    <citation type="journal article" date="2003" name="Mol. Microbiol.">
        <title>Death's toolbox: examining the molecular components of bacterial programmed cell death.</title>
        <authorList>
            <person name="Rice K.C."/>
            <person name="Bayles K.W."/>
        </authorList>
    </citation>
    <scope>REVIEW</scope>
</reference>
<organism>
    <name type="scientific">Staphylococcus aureus (strain NCTC 8325 / PS 47)</name>
    <dbReference type="NCBI Taxonomy" id="93061"/>
    <lineage>
        <taxon>Bacteria</taxon>
        <taxon>Bacillati</taxon>
        <taxon>Bacillota</taxon>
        <taxon>Bacilli</taxon>
        <taxon>Bacillales</taxon>
        <taxon>Staphylococcaceae</taxon>
        <taxon>Staphylococcus</taxon>
    </lineage>
</organism>
<accession>P60643</accession>
<accession>P72359</accession>
<accession>Q2G1B2</accession>
<comment type="function">
    <text evidence="2">Inhibits the expression or activity of extracellular murein hydrolases by interacting, possibly with LrgA, with the holin-like proteins CidA and/or CidB. The LrgAB and CidAB proteins may affect the proton motive force of the membrane. Increases tolerance to penicillin possibly by inhibiting the formation of the CidAB holin-like complexes within the membrane, thus reducing penicillin-induced lethality. Possibly plays a role in programmed cell death (PCD), triggering PCD in response to penicillin, and possibly other antibiotics, and environmental stresses.</text>
</comment>
<comment type="subcellular location">
    <subcellularLocation>
        <location evidence="3">Cell membrane</location>
        <topology evidence="3">Multi-pass membrane protein</topology>
    </subcellularLocation>
</comment>
<comment type="induction">
    <text>Regulated by the two-component system LytR/LytS.</text>
</comment>
<comment type="similarity">
    <text evidence="3">Belongs to the CidB/LrgB family. LrgB subfamily.</text>
</comment>